<reference key="1">
    <citation type="journal article" date="2003" name="Proc. Natl. Acad. Sci. U.S.A.">
        <title>Complete genome sequence of the marine planctomycete Pirellula sp. strain 1.</title>
        <authorList>
            <person name="Gloeckner F.O."/>
            <person name="Kube M."/>
            <person name="Bauer M."/>
            <person name="Teeling H."/>
            <person name="Lombardot T."/>
            <person name="Ludwig W."/>
            <person name="Gade D."/>
            <person name="Beck A."/>
            <person name="Borzym K."/>
            <person name="Heitmann K."/>
            <person name="Rabus R."/>
            <person name="Schlesner H."/>
            <person name="Amann R."/>
            <person name="Reinhardt R."/>
        </authorList>
    </citation>
    <scope>NUCLEOTIDE SEQUENCE [LARGE SCALE GENOMIC DNA]</scope>
    <source>
        <strain>DSM 10527 / NCIMB 13988 / SH1</strain>
    </source>
</reference>
<dbReference type="EC" id="3.5.1.88" evidence="1"/>
<dbReference type="EMBL" id="BX294155">
    <property type="protein sequence ID" value="CAD77822.1"/>
    <property type="molecule type" value="Genomic_DNA"/>
</dbReference>
<dbReference type="RefSeq" id="NP_870745.1">
    <property type="nucleotide sequence ID" value="NC_005027.1"/>
</dbReference>
<dbReference type="RefSeq" id="WP_007324462.1">
    <property type="nucleotide sequence ID" value="NC_005027.1"/>
</dbReference>
<dbReference type="SMR" id="Q7UHZ5"/>
<dbReference type="FunCoup" id="Q7UHZ5">
    <property type="interactions" value="464"/>
</dbReference>
<dbReference type="STRING" id="243090.RB12856"/>
<dbReference type="EnsemblBacteria" id="CAD77822">
    <property type="protein sequence ID" value="CAD77822"/>
    <property type="gene ID" value="RB12856"/>
</dbReference>
<dbReference type="KEGG" id="rba:RB12856"/>
<dbReference type="PATRIC" id="fig|243090.15.peg.6228"/>
<dbReference type="eggNOG" id="COG0242">
    <property type="taxonomic scope" value="Bacteria"/>
</dbReference>
<dbReference type="HOGENOM" id="CLU_061901_2_0_0"/>
<dbReference type="InParanoid" id="Q7UHZ5"/>
<dbReference type="OrthoDB" id="9784988at2"/>
<dbReference type="Proteomes" id="UP000001025">
    <property type="component" value="Chromosome"/>
</dbReference>
<dbReference type="GO" id="GO:0046872">
    <property type="term" value="F:metal ion binding"/>
    <property type="evidence" value="ECO:0007669"/>
    <property type="project" value="UniProtKB-KW"/>
</dbReference>
<dbReference type="GO" id="GO:0042586">
    <property type="term" value="F:peptide deformylase activity"/>
    <property type="evidence" value="ECO:0000318"/>
    <property type="project" value="GO_Central"/>
</dbReference>
<dbReference type="GO" id="GO:0043686">
    <property type="term" value="P:co-translational protein modification"/>
    <property type="evidence" value="ECO:0000318"/>
    <property type="project" value="GO_Central"/>
</dbReference>
<dbReference type="GO" id="GO:0006412">
    <property type="term" value="P:translation"/>
    <property type="evidence" value="ECO:0007669"/>
    <property type="project" value="UniProtKB-UniRule"/>
</dbReference>
<dbReference type="CDD" id="cd00487">
    <property type="entry name" value="Pep_deformylase"/>
    <property type="match status" value="1"/>
</dbReference>
<dbReference type="FunFam" id="3.90.45.10:FF:000017">
    <property type="entry name" value="Peptide deformylase"/>
    <property type="match status" value="1"/>
</dbReference>
<dbReference type="Gene3D" id="3.90.45.10">
    <property type="entry name" value="Peptide deformylase"/>
    <property type="match status" value="1"/>
</dbReference>
<dbReference type="HAMAP" id="MF_00163">
    <property type="entry name" value="Pep_deformylase"/>
    <property type="match status" value="1"/>
</dbReference>
<dbReference type="InterPro" id="IPR023635">
    <property type="entry name" value="Peptide_deformylase"/>
</dbReference>
<dbReference type="InterPro" id="IPR036821">
    <property type="entry name" value="Peptide_deformylase_sf"/>
</dbReference>
<dbReference type="NCBIfam" id="TIGR00079">
    <property type="entry name" value="pept_deformyl"/>
    <property type="match status" value="1"/>
</dbReference>
<dbReference type="NCBIfam" id="NF001159">
    <property type="entry name" value="PRK00150.1-3"/>
    <property type="match status" value="1"/>
</dbReference>
<dbReference type="PANTHER" id="PTHR10458">
    <property type="entry name" value="PEPTIDE DEFORMYLASE"/>
    <property type="match status" value="1"/>
</dbReference>
<dbReference type="PANTHER" id="PTHR10458:SF22">
    <property type="entry name" value="PEPTIDE DEFORMYLASE"/>
    <property type="match status" value="1"/>
</dbReference>
<dbReference type="Pfam" id="PF01327">
    <property type="entry name" value="Pep_deformylase"/>
    <property type="match status" value="1"/>
</dbReference>
<dbReference type="PIRSF" id="PIRSF004749">
    <property type="entry name" value="Pep_def"/>
    <property type="match status" value="1"/>
</dbReference>
<dbReference type="PRINTS" id="PR01576">
    <property type="entry name" value="PDEFORMYLASE"/>
</dbReference>
<dbReference type="SUPFAM" id="SSF56420">
    <property type="entry name" value="Peptide deformylase"/>
    <property type="match status" value="1"/>
</dbReference>
<organism>
    <name type="scientific">Rhodopirellula baltica (strain DSM 10527 / NCIMB 13988 / SH1)</name>
    <dbReference type="NCBI Taxonomy" id="243090"/>
    <lineage>
        <taxon>Bacteria</taxon>
        <taxon>Pseudomonadati</taxon>
        <taxon>Planctomycetota</taxon>
        <taxon>Planctomycetia</taxon>
        <taxon>Pirellulales</taxon>
        <taxon>Pirellulaceae</taxon>
        <taxon>Rhodopirellula</taxon>
    </lineage>
</organism>
<protein>
    <recommendedName>
        <fullName evidence="1">Peptide deformylase</fullName>
        <shortName evidence="1">PDF</shortName>
        <ecNumber evidence="1">3.5.1.88</ecNumber>
    </recommendedName>
    <alternativeName>
        <fullName evidence="1">Polypeptide deformylase</fullName>
    </alternativeName>
</protein>
<keyword id="KW-0378">Hydrolase</keyword>
<keyword id="KW-0408">Iron</keyword>
<keyword id="KW-0479">Metal-binding</keyword>
<keyword id="KW-0648">Protein biosynthesis</keyword>
<keyword id="KW-1185">Reference proteome</keyword>
<sequence>MPLSIIHFPHPTLRHVSRPIVRVDAKLKSMADEMLDLMYEFDGVGLAANQVDLPIRMFVANPTGKRDEGESWVILNPEIDRPKGNDTAQEGCLSVPGLYGQVKRPKTVRLRGFDLQGNEINQVLDGFMARVVQHEVDHLDGIMFFDRIGEEGLRDLEGHLEEFKTDYESKQGTGSIADEATLAQQRAEWEAMYTGGTTSNG</sequence>
<name>DEF_RHOBA</name>
<comment type="function">
    <text evidence="1">Removes the formyl group from the N-terminal Met of newly synthesized proteins. Requires at least a dipeptide for an efficient rate of reaction. N-terminal L-methionine is a prerequisite for activity but the enzyme has broad specificity at other positions.</text>
</comment>
<comment type="catalytic activity">
    <reaction evidence="1">
        <text>N-terminal N-formyl-L-methionyl-[peptide] + H2O = N-terminal L-methionyl-[peptide] + formate</text>
        <dbReference type="Rhea" id="RHEA:24420"/>
        <dbReference type="Rhea" id="RHEA-COMP:10639"/>
        <dbReference type="Rhea" id="RHEA-COMP:10640"/>
        <dbReference type="ChEBI" id="CHEBI:15377"/>
        <dbReference type="ChEBI" id="CHEBI:15740"/>
        <dbReference type="ChEBI" id="CHEBI:49298"/>
        <dbReference type="ChEBI" id="CHEBI:64731"/>
        <dbReference type="EC" id="3.5.1.88"/>
    </reaction>
</comment>
<comment type="cofactor">
    <cofactor evidence="1">
        <name>Fe(2+)</name>
        <dbReference type="ChEBI" id="CHEBI:29033"/>
    </cofactor>
    <text evidence="1">Binds 1 Fe(2+) ion.</text>
</comment>
<comment type="similarity">
    <text evidence="1">Belongs to the polypeptide deformylase family.</text>
</comment>
<evidence type="ECO:0000255" key="1">
    <source>
        <dbReference type="HAMAP-Rule" id="MF_00163"/>
    </source>
</evidence>
<proteinExistence type="inferred from homology"/>
<accession>Q7UHZ5</accession>
<gene>
    <name evidence="1" type="primary">def</name>
    <name type="ordered locus">RB12856</name>
</gene>
<feature type="chain" id="PRO_0000082828" description="Peptide deformylase">
    <location>
        <begin position="1"/>
        <end position="201"/>
    </location>
</feature>
<feature type="active site" evidence="1">
    <location>
        <position position="135"/>
    </location>
</feature>
<feature type="binding site" evidence="1">
    <location>
        <position position="92"/>
    </location>
    <ligand>
        <name>Fe cation</name>
        <dbReference type="ChEBI" id="CHEBI:24875"/>
    </ligand>
</feature>
<feature type="binding site" evidence="1">
    <location>
        <position position="134"/>
    </location>
    <ligand>
        <name>Fe cation</name>
        <dbReference type="ChEBI" id="CHEBI:24875"/>
    </ligand>
</feature>
<feature type="binding site" evidence="1">
    <location>
        <position position="138"/>
    </location>
    <ligand>
        <name>Fe cation</name>
        <dbReference type="ChEBI" id="CHEBI:24875"/>
    </ligand>
</feature>